<dbReference type="EC" id="2.7.1.24" evidence="1"/>
<dbReference type="EMBL" id="CP000251">
    <property type="protein sequence ID" value="ABC82454.1"/>
    <property type="molecule type" value="Genomic_DNA"/>
</dbReference>
<dbReference type="RefSeq" id="WP_011421736.1">
    <property type="nucleotide sequence ID" value="NC_007760.1"/>
</dbReference>
<dbReference type="SMR" id="Q2ILC5"/>
<dbReference type="STRING" id="290397.Adeh_2684"/>
<dbReference type="KEGG" id="ade:Adeh_2684"/>
<dbReference type="eggNOG" id="COG0237">
    <property type="taxonomic scope" value="Bacteria"/>
</dbReference>
<dbReference type="HOGENOM" id="CLU_057180_0_0_7"/>
<dbReference type="OrthoDB" id="9812943at2"/>
<dbReference type="UniPathway" id="UPA00241">
    <property type="reaction ID" value="UER00356"/>
</dbReference>
<dbReference type="Proteomes" id="UP000001935">
    <property type="component" value="Chromosome"/>
</dbReference>
<dbReference type="GO" id="GO:0005737">
    <property type="term" value="C:cytoplasm"/>
    <property type="evidence" value="ECO:0007669"/>
    <property type="project" value="UniProtKB-SubCell"/>
</dbReference>
<dbReference type="GO" id="GO:0005524">
    <property type="term" value="F:ATP binding"/>
    <property type="evidence" value="ECO:0007669"/>
    <property type="project" value="UniProtKB-UniRule"/>
</dbReference>
<dbReference type="GO" id="GO:0004140">
    <property type="term" value="F:dephospho-CoA kinase activity"/>
    <property type="evidence" value="ECO:0007669"/>
    <property type="project" value="UniProtKB-UniRule"/>
</dbReference>
<dbReference type="GO" id="GO:0015937">
    <property type="term" value="P:coenzyme A biosynthetic process"/>
    <property type="evidence" value="ECO:0007669"/>
    <property type="project" value="UniProtKB-UniRule"/>
</dbReference>
<dbReference type="CDD" id="cd02022">
    <property type="entry name" value="DPCK"/>
    <property type="match status" value="1"/>
</dbReference>
<dbReference type="FunFam" id="3.40.50.300:FF:000991">
    <property type="entry name" value="Dephospho-CoA kinase"/>
    <property type="match status" value="1"/>
</dbReference>
<dbReference type="Gene3D" id="3.40.50.300">
    <property type="entry name" value="P-loop containing nucleotide triphosphate hydrolases"/>
    <property type="match status" value="1"/>
</dbReference>
<dbReference type="HAMAP" id="MF_00376">
    <property type="entry name" value="Dephospho_CoA_kinase"/>
    <property type="match status" value="1"/>
</dbReference>
<dbReference type="InterPro" id="IPR001977">
    <property type="entry name" value="Depp_CoAkinase"/>
</dbReference>
<dbReference type="InterPro" id="IPR027417">
    <property type="entry name" value="P-loop_NTPase"/>
</dbReference>
<dbReference type="NCBIfam" id="TIGR00152">
    <property type="entry name" value="dephospho-CoA kinase"/>
    <property type="match status" value="1"/>
</dbReference>
<dbReference type="PANTHER" id="PTHR10695:SF46">
    <property type="entry name" value="BIFUNCTIONAL COENZYME A SYNTHASE-RELATED"/>
    <property type="match status" value="1"/>
</dbReference>
<dbReference type="PANTHER" id="PTHR10695">
    <property type="entry name" value="DEPHOSPHO-COA KINASE-RELATED"/>
    <property type="match status" value="1"/>
</dbReference>
<dbReference type="Pfam" id="PF01121">
    <property type="entry name" value="CoaE"/>
    <property type="match status" value="1"/>
</dbReference>
<dbReference type="SUPFAM" id="SSF52540">
    <property type="entry name" value="P-loop containing nucleoside triphosphate hydrolases"/>
    <property type="match status" value="1"/>
</dbReference>
<dbReference type="PROSITE" id="PS51219">
    <property type="entry name" value="DPCK"/>
    <property type="match status" value="1"/>
</dbReference>
<gene>
    <name evidence="1" type="primary">coaE</name>
    <name type="ordered locus">Adeh_2684</name>
</gene>
<protein>
    <recommendedName>
        <fullName evidence="1">Dephospho-CoA kinase</fullName>
        <ecNumber evidence="1">2.7.1.24</ecNumber>
    </recommendedName>
    <alternativeName>
        <fullName evidence="1">Dephosphocoenzyme A kinase</fullName>
    </alternativeName>
</protein>
<feature type="chain" id="PRO_0000243253" description="Dephospho-CoA kinase">
    <location>
        <begin position="1"/>
        <end position="211"/>
    </location>
</feature>
<feature type="domain" description="DPCK" evidence="1">
    <location>
        <begin position="3"/>
        <end position="206"/>
    </location>
</feature>
<feature type="binding site" evidence="1">
    <location>
        <begin position="11"/>
        <end position="16"/>
    </location>
    <ligand>
        <name>ATP</name>
        <dbReference type="ChEBI" id="CHEBI:30616"/>
    </ligand>
</feature>
<name>COAE_ANADE</name>
<keyword id="KW-0067">ATP-binding</keyword>
<keyword id="KW-0173">Coenzyme A biosynthesis</keyword>
<keyword id="KW-0963">Cytoplasm</keyword>
<keyword id="KW-0418">Kinase</keyword>
<keyword id="KW-0547">Nucleotide-binding</keyword>
<keyword id="KW-1185">Reference proteome</keyword>
<keyword id="KW-0808">Transferase</keyword>
<evidence type="ECO:0000255" key="1">
    <source>
        <dbReference type="HAMAP-Rule" id="MF_00376"/>
    </source>
</evidence>
<sequence length="211" mass="22334">MRVIGLTGGIATGKSTFAALLRARGAPVVDADALARAAVEPGTPALAEIARTFGAEVLRPDGALDRKALGARVFADPGARRRLEAITHPAVRLAMREETARLAAQGHPLAFYDTPLLYEVGLEALLDAVVVVWAPRDVQRERLMRRDGLGGAEADARLAAQLPVDEKAARADFVVENAGAPEALAGKADRLLADLRGGRGRRLPNAPPVRY</sequence>
<accession>Q2ILC5</accession>
<organism>
    <name type="scientific">Anaeromyxobacter dehalogenans (strain 2CP-C)</name>
    <dbReference type="NCBI Taxonomy" id="290397"/>
    <lineage>
        <taxon>Bacteria</taxon>
        <taxon>Pseudomonadati</taxon>
        <taxon>Myxococcota</taxon>
        <taxon>Myxococcia</taxon>
        <taxon>Myxococcales</taxon>
        <taxon>Cystobacterineae</taxon>
        <taxon>Anaeromyxobacteraceae</taxon>
        <taxon>Anaeromyxobacter</taxon>
    </lineage>
</organism>
<reference key="1">
    <citation type="submission" date="2006-01" db="EMBL/GenBank/DDBJ databases">
        <title>Complete sequence of Anaeromyxobacter dehalogenans 2CP-C.</title>
        <authorList>
            <person name="Copeland A."/>
            <person name="Lucas S."/>
            <person name="Lapidus A."/>
            <person name="Barry K."/>
            <person name="Detter J.C."/>
            <person name="Glavina T."/>
            <person name="Hammon N."/>
            <person name="Israni S."/>
            <person name="Pitluck S."/>
            <person name="Brettin T."/>
            <person name="Bruce D."/>
            <person name="Han C."/>
            <person name="Tapia R."/>
            <person name="Gilna P."/>
            <person name="Kiss H."/>
            <person name="Schmutz J."/>
            <person name="Larimer F."/>
            <person name="Land M."/>
            <person name="Kyrpides N."/>
            <person name="Anderson I."/>
            <person name="Sanford R.A."/>
            <person name="Ritalahti K.M."/>
            <person name="Thomas H.S."/>
            <person name="Kirby J.R."/>
            <person name="Zhulin I.B."/>
            <person name="Loeffler F.E."/>
            <person name="Richardson P."/>
        </authorList>
    </citation>
    <scope>NUCLEOTIDE SEQUENCE [LARGE SCALE GENOMIC DNA]</scope>
    <source>
        <strain>2CP-C</strain>
    </source>
</reference>
<proteinExistence type="inferred from homology"/>
<comment type="function">
    <text evidence="1">Catalyzes the phosphorylation of the 3'-hydroxyl group of dephosphocoenzyme A to form coenzyme A.</text>
</comment>
<comment type="catalytic activity">
    <reaction evidence="1">
        <text>3'-dephospho-CoA + ATP = ADP + CoA + H(+)</text>
        <dbReference type="Rhea" id="RHEA:18245"/>
        <dbReference type="ChEBI" id="CHEBI:15378"/>
        <dbReference type="ChEBI" id="CHEBI:30616"/>
        <dbReference type="ChEBI" id="CHEBI:57287"/>
        <dbReference type="ChEBI" id="CHEBI:57328"/>
        <dbReference type="ChEBI" id="CHEBI:456216"/>
        <dbReference type="EC" id="2.7.1.24"/>
    </reaction>
</comment>
<comment type="pathway">
    <text evidence="1">Cofactor biosynthesis; coenzyme A biosynthesis; CoA from (R)-pantothenate: step 5/5.</text>
</comment>
<comment type="subcellular location">
    <subcellularLocation>
        <location evidence="1">Cytoplasm</location>
    </subcellularLocation>
</comment>
<comment type="similarity">
    <text evidence="1">Belongs to the CoaE family.</text>
</comment>